<evidence type="ECO:0000255" key="1">
    <source>
        <dbReference type="HAMAP-Rule" id="MF_03115"/>
    </source>
</evidence>
<evidence type="ECO:0000256" key="2">
    <source>
        <dbReference type="SAM" id="MobiDB-lite"/>
    </source>
</evidence>
<comment type="function">
    <text evidence="1">Component of the cytosolic iron-sulfur (Fe-S) protein assembly (CIA) machinery required for the maturation of extramitochondrial Fe-S proteins. Part of an electron transfer chain functioning in an early step of cytosolic Fe-S biogenesis, facilitating the de novo assembly of a [4Fe-4S] cluster on the scaffold complex CFD1-NBP35. Electrons are transferred to DRE2 from NADPH via the FAD- and FMN-containing protein TAH18. TAH18-DRE2 are also required for the assembly of the diferric tyrosyl radical cofactor of ribonucleotide reductase (RNR), probably by providing electrons for reduction during radical cofactor maturation in the catalytic small subunit RNR2.</text>
</comment>
<comment type="cofactor">
    <cofactor evidence="1">
        <name>[2Fe-2S] cluster</name>
        <dbReference type="ChEBI" id="CHEBI:190135"/>
    </cofactor>
</comment>
<comment type="cofactor">
    <cofactor evidence="1">
        <name>[4Fe-4S] cluster</name>
        <dbReference type="ChEBI" id="CHEBI:49883"/>
    </cofactor>
</comment>
<comment type="subunit">
    <text evidence="1">Monomer. Interacts with TAH18. Interacts with MIA40.</text>
</comment>
<comment type="subcellular location">
    <subcellularLocation>
        <location evidence="1">Cytoplasm</location>
    </subcellularLocation>
    <subcellularLocation>
        <location evidence="1">Mitochondrion intermembrane space</location>
    </subcellularLocation>
</comment>
<comment type="domain">
    <text evidence="1">The C-terminal domain binds 2 Fe-S clusters but is otherwise mostly in an intrinsically disordered conformation.</text>
</comment>
<comment type="domain">
    <text evidence="1">The N-terminal domain has structural similarity with S-adenosyl-L-methionine-dependent methyltransferases, but does not bind S-adenosyl-L-methionine. It is required for correct assembly of the 2 Fe-S clusters.</text>
</comment>
<comment type="domain">
    <text evidence="1">The twin Cx2C motifs are involved in the recognition by the mitochondrial MIA40-ERV1 disulfide relay system. The formation of 2 disulfide bonds in the Cx2C motifs through dithiol/disulfide exchange reactions effectively traps the protein in the mitochondrial intermembrane space.</text>
</comment>
<comment type="similarity">
    <text evidence="1">Belongs to the anamorsin family.</text>
</comment>
<reference key="1">
    <citation type="journal article" date="2007" name="Proc. Natl. Acad. Sci. U.S.A.">
        <title>Dandruff-associated Malassezia genomes reveal convergent and divergent virulence traits shared with plant and human fungal pathogens.</title>
        <authorList>
            <person name="Xu J."/>
            <person name="Saunders C.W."/>
            <person name="Hu P."/>
            <person name="Grant R.A."/>
            <person name="Boekhout T."/>
            <person name="Kuramae E.E."/>
            <person name="Kronstad J.W."/>
            <person name="DeAngelis Y.M."/>
            <person name="Reeder N.L."/>
            <person name="Johnstone K.R."/>
            <person name="Leland M."/>
            <person name="Fieno A.M."/>
            <person name="Begley W.M."/>
            <person name="Sun Y."/>
            <person name="Lacey M.P."/>
            <person name="Chaudhary T."/>
            <person name="Keough T."/>
            <person name="Chu L."/>
            <person name="Sears R."/>
            <person name="Yuan B."/>
            <person name="Dawson T.L. Jr."/>
        </authorList>
    </citation>
    <scope>NUCLEOTIDE SEQUENCE [LARGE SCALE GENOMIC DNA]</scope>
    <source>
        <strain>ATCC MYA-4612 / CBS 7966</strain>
    </source>
</reference>
<feature type="chain" id="PRO_0000392393" description="Fe-S cluster assembly protein DRE2">
    <location>
        <begin position="1"/>
        <end position="321"/>
    </location>
</feature>
<feature type="region of interest" description="N-terminal SAM-like domain" evidence="1">
    <location>
        <begin position="1"/>
        <end position="140"/>
    </location>
</feature>
<feature type="region of interest" description="Disordered" evidence="2">
    <location>
        <begin position="128"/>
        <end position="166"/>
    </location>
</feature>
<feature type="region of interest" description="Linker" evidence="1">
    <location>
        <begin position="140"/>
        <end position="177"/>
    </location>
</feature>
<feature type="region of interest" description="Fe-S binding site A" evidence="1">
    <location>
        <begin position="202"/>
        <end position="222"/>
    </location>
</feature>
<feature type="region of interest" description="Disordered" evidence="2">
    <location>
        <begin position="239"/>
        <end position="263"/>
    </location>
</feature>
<feature type="region of interest" description="Fe-S binding site B" evidence="1">
    <location>
        <begin position="283"/>
        <end position="297"/>
    </location>
</feature>
<feature type="short sequence motif" description="Cx2C motif 1" evidence="1">
    <location>
        <begin position="283"/>
        <end position="286"/>
    </location>
</feature>
<feature type="short sequence motif" description="Cx2C motif 2" evidence="1">
    <location>
        <begin position="294"/>
        <end position="297"/>
    </location>
</feature>
<feature type="compositionally biased region" description="Polar residues" evidence="2">
    <location>
        <begin position="128"/>
        <end position="138"/>
    </location>
</feature>
<feature type="binding site" evidence="1">
    <location>
        <position position="202"/>
    </location>
    <ligand>
        <name>[2Fe-2S] cluster</name>
        <dbReference type="ChEBI" id="CHEBI:190135"/>
    </ligand>
</feature>
<feature type="binding site" evidence="1">
    <location>
        <position position="217"/>
    </location>
    <ligand>
        <name>[2Fe-2S] cluster</name>
        <dbReference type="ChEBI" id="CHEBI:190135"/>
    </ligand>
</feature>
<feature type="binding site" evidence="1">
    <location>
        <position position="220"/>
    </location>
    <ligand>
        <name>[2Fe-2S] cluster</name>
        <dbReference type="ChEBI" id="CHEBI:190135"/>
    </ligand>
</feature>
<feature type="binding site" evidence="1">
    <location>
        <position position="222"/>
    </location>
    <ligand>
        <name>[2Fe-2S] cluster</name>
        <dbReference type="ChEBI" id="CHEBI:190135"/>
    </ligand>
</feature>
<feature type="binding site" evidence="1">
    <location>
        <position position="283"/>
    </location>
    <ligand>
        <name>[4Fe-4S] cluster</name>
        <dbReference type="ChEBI" id="CHEBI:49883"/>
    </ligand>
</feature>
<feature type="binding site" evidence="1">
    <location>
        <position position="286"/>
    </location>
    <ligand>
        <name>[4Fe-4S] cluster</name>
        <dbReference type="ChEBI" id="CHEBI:49883"/>
    </ligand>
</feature>
<feature type="binding site" evidence="1">
    <location>
        <position position="294"/>
    </location>
    <ligand>
        <name>[4Fe-4S] cluster</name>
        <dbReference type="ChEBI" id="CHEBI:49883"/>
    </ligand>
</feature>
<feature type="binding site" evidence="1">
    <location>
        <position position="297"/>
    </location>
    <ligand>
        <name>[4Fe-4S] cluster</name>
        <dbReference type="ChEBI" id="CHEBI:49883"/>
    </ligand>
</feature>
<dbReference type="EMBL" id="AAYY01000001">
    <property type="protein sequence ID" value="EDP45228.1"/>
    <property type="molecule type" value="Genomic_DNA"/>
</dbReference>
<dbReference type="RefSeq" id="XP_001732442.1">
    <property type="nucleotide sequence ID" value="XM_001732390.1"/>
</dbReference>
<dbReference type="SMR" id="A8PS95"/>
<dbReference type="FunCoup" id="A8PS95">
    <property type="interactions" value="280"/>
</dbReference>
<dbReference type="STRING" id="425265.A8PS95"/>
<dbReference type="GeneID" id="5856748"/>
<dbReference type="KEGG" id="mgl:MGL_0217"/>
<dbReference type="VEuPathDB" id="FungiDB:MGL_0217"/>
<dbReference type="InParanoid" id="A8PS95"/>
<dbReference type="OrthoDB" id="311633at2759"/>
<dbReference type="Proteomes" id="UP000008837">
    <property type="component" value="Unassembled WGS sequence"/>
</dbReference>
<dbReference type="GO" id="GO:0005758">
    <property type="term" value="C:mitochondrial intermembrane space"/>
    <property type="evidence" value="ECO:0007669"/>
    <property type="project" value="UniProtKB-SubCell"/>
</dbReference>
<dbReference type="GO" id="GO:0051537">
    <property type="term" value="F:2 iron, 2 sulfur cluster binding"/>
    <property type="evidence" value="ECO:0007669"/>
    <property type="project" value="UniProtKB-UniRule"/>
</dbReference>
<dbReference type="GO" id="GO:0051539">
    <property type="term" value="F:4 iron, 4 sulfur cluster binding"/>
    <property type="evidence" value="ECO:0007669"/>
    <property type="project" value="UniProtKB-KW"/>
</dbReference>
<dbReference type="GO" id="GO:0009055">
    <property type="term" value="F:electron transfer activity"/>
    <property type="evidence" value="ECO:0007669"/>
    <property type="project" value="UniProtKB-UniRule"/>
</dbReference>
<dbReference type="GO" id="GO:0046872">
    <property type="term" value="F:metal ion binding"/>
    <property type="evidence" value="ECO:0007669"/>
    <property type="project" value="UniProtKB-KW"/>
</dbReference>
<dbReference type="GO" id="GO:0016226">
    <property type="term" value="P:iron-sulfur cluster assembly"/>
    <property type="evidence" value="ECO:0007669"/>
    <property type="project" value="UniProtKB-UniRule"/>
</dbReference>
<dbReference type="Gene3D" id="3.40.50.150">
    <property type="entry name" value="Vaccinia Virus protein VP39"/>
    <property type="match status" value="1"/>
</dbReference>
<dbReference type="HAMAP" id="MF_03115">
    <property type="entry name" value="Anamorsin"/>
    <property type="match status" value="1"/>
</dbReference>
<dbReference type="InterPro" id="IPR007785">
    <property type="entry name" value="Anamorsin"/>
</dbReference>
<dbReference type="InterPro" id="IPR046408">
    <property type="entry name" value="CIAPIN1"/>
</dbReference>
<dbReference type="InterPro" id="IPR031838">
    <property type="entry name" value="Dre2_N"/>
</dbReference>
<dbReference type="InterPro" id="IPR029063">
    <property type="entry name" value="SAM-dependent_MTases_sf"/>
</dbReference>
<dbReference type="PANTHER" id="PTHR13273">
    <property type="entry name" value="ANAMORSIN"/>
    <property type="match status" value="1"/>
</dbReference>
<dbReference type="PANTHER" id="PTHR13273:SF14">
    <property type="entry name" value="ANAMORSIN"/>
    <property type="match status" value="1"/>
</dbReference>
<dbReference type="Pfam" id="PF05093">
    <property type="entry name" value="CIAPIN1"/>
    <property type="match status" value="1"/>
</dbReference>
<dbReference type="Pfam" id="PF16803">
    <property type="entry name" value="DRE2_N"/>
    <property type="match status" value="1"/>
</dbReference>
<name>DRE2_MALGO</name>
<gene>
    <name evidence="1" type="primary">DRE2</name>
    <name type="ORF">MGL_0217</name>
</gene>
<protein>
    <recommendedName>
        <fullName evidence="1">Fe-S cluster assembly protein DRE2</fullName>
    </recommendedName>
    <alternativeName>
        <fullName evidence="1">Anamorsin homolog</fullName>
    </alternativeName>
</protein>
<proteinExistence type="inferred from homology"/>
<organism>
    <name type="scientific">Malassezia globosa (strain ATCC MYA-4612 / CBS 7966)</name>
    <name type="common">Dandruff-associated fungus</name>
    <dbReference type="NCBI Taxonomy" id="425265"/>
    <lineage>
        <taxon>Eukaryota</taxon>
        <taxon>Fungi</taxon>
        <taxon>Dikarya</taxon>
        <taxon>Basidiomycota</taxon>
        <taxon>Ustilaginomycotina</taxon>
        <taxon>Malasseziomycetes</taxon>
        <taxon>Malasseziales</taxon>
        <taxon>Malasseziaceae</taxon>
        <taxon>Malassezia</taxon>
    </lineage>
</organism>
<sequence length="321" mass="34958">MNNTAHSMSEKVLLVASLEAARYGQYQQAVKGLQAESGLLETHMIDRITDLAYAPPADYFDAVYMMLPSEGVEWAAALPKLRASMIPGAKLRVSVVNENDPSSFLSQVRAELTIAGFTDIQTYENASIESRRPASSSVAEKDSTASSGMGAVKLRRKPNENGGHQQKKALLWATQPETHMDTEAKLQEHARTVSPASRREDCTVDFSAPRTRRKRACKGCTCGLRELEEEDERNSNLVQLDPSEVGGTGGKRTEVTTTVKGPNGEEHTVRRIQVDTRGATSSCGSCFLGDAFRCSSCPYLGLPAFEPGQKVEIPANMDDDL</sequence>
<accession>A8PS95</accession>
<keyword id="KW-0001">2Fe-2S</keyword>
<keyword id="KW-0004">4Fe-4S</keyword>
<keyword id="KW-0963">Cytoplasm</keyword>
<keyword id="KW-0408">Iron</keyword>
<keyword id="KW-0411">Iron-sulfur</keyword>
<keyword id="KW-0479">Metal-binding</keyword>
<keyword id="KW-0496">Mitochondrion</keyword>
<keyword id="KW-1185">Reference proteome</keyword>